<dbReference type="EC" id="4.1.2.57" evidence="2"/>
<dbReference type="EMBL" id="PVNS01000006">
    <property type="protein sequence ID" value="PRO65853.1"/>
    <property type="molecule type" value="Genomic_DNA"/>
</dbReference>
<dbReference type="RefSeq" id="WP_105958949.1">
    <property type="nucleotide sequence ID" value="NZ_PVNS01000006.1"/>
</dbReference>
<dbReference type="SMR" id="A0A2P6MHY1"/>
<dbReference type="OrthoDB" id="9803995at2"/>
<dbReference type="BioCyc" id="MetaCyc:MONOMER-21943"/>
<dbReference type="Proteomes" id="UP000243650">
    <property type="component" value="Unassembled WGS sequence"/>
</dbReference>
<dbReference type="GO" id="GO:0016832">
    <property type="term" value="F:aldehyde-lyase activity"/>
    <property type="evidence" value="ECO:0007669"/>
    <property type="project" value="InterPro"/>
</dbReference>
<dbReference type="GO" id="GO:0008270">
    <property type="term" value="F:zinc ion binding"/>
    <property type="evidence" value="ECO:0007669"/>
    <property type="project" value="InterPro"/>
</dbReference>
<dbReference type="GO" id="GO:0005975">
    <property type="term" value="P:carbohydrate metabolic process"/>
    <property type="evidence" value="ECO:0007669"/>
    <property type="project" value="InterPro"/>
</dbReference>
<dbReference type="CDD" id="cd00947">
    <property type="entry name" value="TBP_aldolase_IIB"/>
    <property type="match status" value="1"/>
</dbReference>
<dbReference type="Gene3D" id="3.20.20.70">
    <property type="entry name" value="Aldolase class I"/>
    <property type="match status" value="1"/>
</dbReference>
<dbReference type="InterPro" id="IPR013785">
    <property type="entry name" value="Aldolase_TIM"/>
</dbReference>
<dbReference type="InterPro" id="IPR050246">
    <property type="entry name" value="Class_II_FBP_aldolase"/>
</dbReference>
<dbReference type="InterPro" id="IPR000771">
    <property type="entry name" value="FBA_II"/>
</dbReference>
<dbReference type="NCBIfam" id="TIGR00167">
    <property type="entry name" value="cbbA"/>
    <property type="match status" value="1"/>
</dbReference>
<dbReference type="PANTHER" id="PTHR30304">
    <property type="entry name" value="D-TAGATOSE-1,6-BISPHOSPHATE ALDOLASE"/>
    <property type="match status" value="1"/>
</dbReference>
<dbReference type="PANTHER" id="PTHR30304:SF0">
    <property type="entry name" value="D-TAGATOSE-1,6-BISPHOSPHATE ALDOLASE SUBUNIT GATY-RELATED"/>
    <property type="match status" value="1"/>
</dbReference>
<dbReference type="Pfam" id="PF01116">
    <property type="entry name" value="F_bP_aldolase"/>
    <property type="match status" value="1"/>
</dbReference>
<dbReference type="PIRSF" id="PIRSF001359">
    <property type="entry name" value="F_bP_aldolase_II"/>
    <property type="match status" value="1"/>
</dbReference>
<dbReference type="SUPFAM" id="SSF51569">
    <property type="entry name" value="Aldolase"/>
    <property type="match status" value="1"/>
</dbReference>
<dbReference type="PROSITE" id="PS00602">
    <property type="entry name" value="ALDOLASE_CLASS_II_1"/>
    <property type="match status" value="1"/>
</dbReference>
<organism>
    <name type="scientific">Alkalicoccus urumqiensis</name>
    <name type="common">Bacillus urumqiensis</name>
    <dbReference type="NCBI Taxonomy" id="1548213"/>
    <lineage>
        <taxon>Bacteria</taxon>
        <taxon>Bacillati</taxon>
        <taxon>Bacillota</taxon>
        <taxon>Bacilli</taxon>
        <taxon>Bacillales</taxon>
        <taxon>Bacillaceae</taxon>
        <taxon>Alkalicoccus</taxon>
    </lineage>
</organism>
<name>SQIA_ALKUR</name>
<reference key="1">
    <citation type="submission" date="2018-03" db="EMBL/GenBank/DDBJ databases">
        <title>Bacillus urumqiensis sp. nov., a moderately haloalkaliphilic bacterium isolated from a salt lake.</title>
        <authorList>
            <person name="Zhao B."/>
            <person name="Liao Z."/>
        </authorList>
    </citation>
    <scope>NUCLEOTIDE SEQUENCE [LARGE SCALE GENOMIC DNA]</scope>
    <source>
        <strain>DSM 29145 / JCM 30195 / BZ-SZ-XJ18</strain>
    </source>
</reference>
<reference key="2">
    <citation type="journal article" date="2021" name="ACS Catal.">
        <title>Mechanistically diverse pathways for sulfoquinovose degradation in bacteria.</title>
        <authorList>
            <person name="Liu J."/>
            <person name="Wei Y."/>
            <person name="Ma K."/>
            <person name="An J."/>
            <person name="Liu X."/>
            <person name="Liu Y."/>
            <person name="Ang E.L."/>
            <person name="Zhao H."/>
            <person name="Zhang Y."/>
        </authorList>
    </citation>
    <scope>FUNCTION</scope>
    <scope>CATALYTIC ACTIVITY</scope>
</reference>
<gene>
    <name evidence="3" type="primary">sqiA</name>
    <name evidence="5" type="ORF">C6I21_08125</name>
</gene>
<feature type="chain" id="PRO_0000458936" description="Sulfofructosephosphate aldolase">
    <location>
        <begin position="1"/>
        <end position="287"/>
    </location>
</feature>
<feature type="active site" description="Proton donor" evidence="1">
    <location>
        <position position="82"/>
    </location>
</feature>
<feature type="binding site" evidence="1">
    <location>
        <position position="83"/>
    </location>
    <ligand>
        <name>Zn(2+)</name>
        <dbReference type="ChEBI" id="CHEBI:29105"/>
        <note>catalytic</note>
    </ligand>
</feature>
<feature type="binding site" evidence="1">
    <location>
        <position position="180"/>
    </location>
    <ligand>
        <name>Zn(2+)</name>
        <dbReference type="ChEBI" id="CHEBI:29105"/>
        <note>catalytic</note>
    </ligand>
</feature>
<feature type="binding site" evidence="1">
    <location>
        <position position="181"/>
    </location>
    <ligand>
        <name>dihydroxyacetone phosphate</name>
        <dbReference type="ChEBI" id="CHEBI:57642"/>
    </ligand>
</feature>
<feature type="binding site" evidence="1">
    <location>
        <position position="208"/>
    </location>
    <ligand>
        <name>Zn(2+)</name>
        <dbReference type="ChEBI" id="CHEBI:29105"/>
        <note>catalytic</note>
    </ligand>
</feature>
<feature type="binding site" evidence="1">
    <location>
        <begin position="209"/>
        <end position="211"/>
    </location>
    <ligand>
        <name>dihydroxyacetone phosphate</name>
        <dbReference type="ChEBI" id="CHEBI:57642"/>
    </ligand>
</feature>
<feature type="binding site" evidence="1">
    <location>
        <begin position="230"/>
        <end position="233"/>
    </location>
    <ligand>
        <name>dihydroxyacetone phosphate</name>
        <dbReference type="ChEBI" id="CHEBI:57642"/>
    </ligand>
</feature>
<keyword id="KW-0119">Carbohydrate metabolism</keyword>
<keyword id="KW-0456">Lyase</keyword>
<keyword id="KW-0479">Metal-binding</keyword>
<keyword id="KW-1185">Reference proteome</keyword>
<keyword id="KW-0862">Zinc</keyword>
<evidence type="ECO:0000250" key="1">
    <source>
        <dbReference type="UniProtKB" id="P0AB74"/>
    </source>
</evidence>
<evidence type="ECO:0000269" key="2">
    <source ref="2"/>
</evidence>
<evidence type="ECO:0000303" key="3">
    <source ref="2"/>
</evidence>
<evidence type="ECO:0000305" key="4"/>
<evidence type="ECO:0000312" key="5">
    <source>
        <dbReference type="EMBL" id="PRO65853.1"/>
    </source>
</evidence>
<sequence>MAYISGKTMLENAYKEGYGVGAFSAHNAETIQGILEAAEQMKSPIMIQVGQKVIQNVGLEPMKALIDIYMKDVTVPVAVHLDHCRDLGQAMKAIQLGFQSVMFDGSALSFEENAEKTKLVADAASHLGIGSEGEIGKIGGTEDDITVDEKDAQITSEEEALAFADRSRVDYLALSIGTAHGIYKQEPELAFDRIEEISKSLNKPLVMHGGSDVPDADVKKAIGLGIAKINVDTELRVAFTEGMKQCLQDNPNEYHLAHSLGAGKEAMIDKVKEKIRVFGSENKARTY</sequence>
<accession>A0A2P6MHY1</accession>
<protein>
    <recommendedName>
        <fullName evidence="3">Sulfofructosephosphate aldolase</fullName>
        <shortName evidence="3">SFP aldolase</shortName>
        <ecNumber evidence="2">4.1.2.57</ecNumber>
    </recommendedName>
</protein>
<comment type="function">
    <text evidence="2">Part of the sulfo-EMP2 pathway, a D-sulfoquinovose degradation pathway that produces sulfolactate (SL) (Ref.2). Cleaves 6-deoxy-6-sulfo-D-fructose 1-phosphate (SFP) to form dihydroxyacetone phosphate (DHAP) and 3-sulfolactaldehyde (SLA) (Ref.2).</text>
</comment>
<comment type="catalytic activity">
    <reaction evidence="2">
        <text>6-deoxy-6-sulfo-D-fructose 1-phosphate = (2S)-3-sulfolactaldehyde + dihydroxyacetone phosphate</text>
        <dbReference type="Rhea" id="RHEA:40515"/>
        <dbReference type="ChEBI" id="CHEBI:57642"/>
        <dbReference type="ChEBI" id="CHEBI:77134"/>
        <dbReference type="ChEBI" id="CHEBI:90109"/>
        <dbReference type="EC" id="4.1.2.57"/>
    </reaction>
    <physiologicalReaction direction="left-to-right" evidence="2">
        <dbReference type="Rhea" id="RHEA:40516"/>
    </physiologicalReaction>
</comment>
<comment type="cofactor">
    <cofactor evidence="1">
        <name>Zn(2+)</name>
        <dbReference type="ChEBI" id="CHEBI:29105"/>
    </cofactor>
    <text evidence="1">Binds 1 zinc ion per subunit.</text>
</comment>
<comment type="similarity">
    <text evidence="4">Belongs to the class II fructose-bisphosphate aldolase family.</text>
</comment>
<proteinExistence type="evidence at protein level"/>